<comment type="function">
    <text evidence="1">Catalyzes the NADPH-dependent reduction of 7-cyano-7-deazaguanine (preQ0) to 7-aminomethyl-7-deazaguanine (preQ1).</text>
</comment>
<comment type="catalytic activity">
    <reaction evidence="1">
        <text>7-aminomethyl-7-carbaguanine + 2 NADP(+) = 7-cyano-7-deazaguanine + 2 NADPH + 3 H(+)</text>
        <dbReference type="Rhea" id="RHEA:13409"/>
        <dbReference type="ChEBI" id="CHEBI:15378"/>
        <dbReference type="ChEBI" id="CHEBI:45075"/>
        <dbReference type="ChEBI" id="CHEBI:57783"/>
        <dbReference type="ChEBI" id="CHEBI:58349"/>
        <dbReference type="ChEBI" id="CHEBI:58703"/>
        <dbReference type="EC" id="1.7.1.13"/>
    </reaction>
</comment>
<comment type="pathway">
    <text evidence="1">tRNA modification; tRNA-queuosine biosynthesis.</text>
</comment>
<comment type="subcellular location">
    <subcellularLocation>
        <location evidence="1">Cytoplasm</location>
    </subcellularLocation>
</comment>
<comment type="similarity">
    <text evidence="1">Belongs to the GTP cyclohydrolase I family. QueF type 1 subfamily.</text>
</comment>
<gene>
    <name evidence="1" type="primary">queF</name>
    <name type="ordered locus">Mlg_0678</name>
</gene>
<name>QUEF_ALKEH</name>
<organism>
    <name type="scientific">Alkalilimnicola ehrlichii (strain ATCC BAA-1101 / DSM 17681 / MLHE-1)</name>
    <dbReference type="NCBI Taxonomy" id="187272"/>
    <lineage>
        <taxon>Bacteria</taxon>
        <taxon>Pseudomonadati</taxon>
        <taxon>Pseudomonadota</taxon>
        <taxon>Gammaproteobacteria</taxon>
        <taxon>Chromatiales</taxon>
        <taxon>Ectothiorhodospiraceae</taxon>
        <taxon>Alkalilimnicola</taxon>
    </lineage>
</organism>
<dbReference type="EC" id="1.7.1.13" evidence="1"/>
<dbReference type="EMBL" id="CP000453">
    <property type="protein sequence ID" value="ABI56032.1"/>
    <property type="molecule type" value="Genomic_DNA"/>
</dbReference>
<dbReference type="RefSeq" id="WP_011628427.1">
    <property type="nucleotide sequence ID" value="NC_008340.1"/>
</dbReference>
<dbReference type="SMR" id="Q0AAV5"/>
<dbReference type="KEGG" id="aeh:Mlg_0678"/>
<dbReference type="eggNOG" id="COG0780">
    <property type="taxonomic scope" value="Bacteria"/>
</dbReference>
<dbReference type="HOGENOM" id="CLU_102489_1_0_6"/>
<dbReference type="OrthoDB" id="9789995at2"/>
<dbReference type="UniPathway" id="UPA00392"/>
<dbReference type="Proteomes" id="UP000001962">
    <property type="component" value="Chromosome"/>
</dbReference>
<dbReference type="GO" id="GO:0005737">
    <property type="term" value="C:cytoplasm"/>
    <property type="evidence" value="ECO:0007669"/>
    <property type="project" value="UniProtKB-SubCell"/>
</dbReference>
<dbReference type="GO" id="GO:0033739">
    <property type="term" value="F:preQ1 synthase activity"/>
    <property type="evidence" value="ECO:0007669"/>
    <property type="project" value="UniProtKB-UniRule"/>
</dbReference>
<dbReference type="GO" id="GO:0008616">
    <property type="term" value="P:queuosine biosynthetic process"/>
    <property type="evidence" value="ECO:0007669"/>
    <property type="project" value="UniProtKB-UniRule"/>
</dbReference>
<dbReference type="GO" id="GO:0006400">
    <property type="term" value="P:tRNA modification"/>
    <property type="evidence" value="ECO:0007669"/>
    <property type="project" value="UniProtKB-UniRule"/>
</dbReference>
<dbReference type="Gene3D" id="3.30.1130.10">
    <property type="match status" value="1"/>
</dbReference>
<dbReference type="HAMAP" id="MF_00818">
    <property type="entry name" value="QueF_type1"/>
    <property type="match status" value="1"/>
</dbReference>
<dbReference type="InterPro" id="IPR043133">
    <property type="entry name" value="GTP-CH-I_C/QueF"/>
</dbReference>
<dbReference type="InterPro" id="IPR050084">
    <property type="entry name" value="NADPH_dep_7-cyano-7-deazaG_red"/>
</dbReference>
<dbReference type="InterPro" id="IPR029500">
    <property type="entry name" value="QueF"/>
</dbReference>
<dbReference type="InterPro" id="IPR016856">
    <property type="entry name" value="QueF_type1"/>
</dbReference>
<dbReference type="NCBIfam" id="TIGR03139">
    <property type="entry name" value="QueF-II"/>
    <property type="match status" value="1"/>
</dbReference>
<dbReference type="PANTHER" id="PTHR34354">
    <property type="entry name" value="NADPH-DEPENDENT 7-CYANO-7-DEAZAGUANINE REDUCTASE"/>
    <property type="match status" value="1"/>
</dbReference>
<dbReference type="PANTHER" id="PTHR34354:SF1">
    <property type="entry name" value="NADPH-DEPENDENT 7-CYANO-7-DEAZAGUANINE REDUCTASE"/>
    <property type="match status" value="1"/>
</dbReference>
<dbReference type="Pfam" id="PF14489">
    <property type="entry name" value="QueF"/>
    <property type="match status" value="1"/>
</dbReference>
<dbReference type="PIRSF" id="PIRSF027377">
    <property type="entry name" value="Nitrile_oxidored_QueF"/>
    <property type="match status" value="1"/>
</dbReference>
<dbReference type="SUPFAM" id="SSF55620">
    <property type="entry name" value="Tetrahydrobiopterin biosynthesis enzymes-like"/>
    <property type="match status" value="1"/>
</dbReference>
<feature type="chain" id="PRO_1000062374" description="NADPH-dependent 7-cyano-7-deazaguanine reductase">
    <location>
        <begin position="1"/>
        <end position="129"/>
    </location>
</feature>
<feature type="active site" description="Thioimide intermediate" evidence="1">
    <location>
        <position position="34"/>
    </location>
</feature>
<feature type="active site" description="Proton donor" evidence="1">
    <location>
        <position position="41"/>
    </location>
</feature>
<feature type="binding site" evidence="1">
    <location>
        <begin position="56"/>
        <end position="58"/>
    </location>
    <ligand>
        <name>substrate</name>
    </ligand>
</feature>
<feature type="binding site" evidence="1">
    <location>
        <begin position="75"/>
        <end position="76"/>
    </location>
    <ligand>
        <name>substrate</name>
    </ligand>
</feature>
<sequence length="129" mass="14915">MSTQPSKDLETFPNPRPERDFVLHMRIPEFTCLCPKTGQPDFATIHLDYVPDERCVELKSLKLYMWSFRDQGAFHEAITNEILDDLVRATEPRYMKVTAEFYVRGGIYTTVVAEHRKPGWAPAPKVELA</sequence>
<keyword id="KW-0963">Cytoplasm</keyword>
<keyword id="KW-0521">NADP</keyword>
<keyword id="KW-0560">Oxidoreductase</keyword>
<keyword id="KW-0671">Queuosine biosynthesis</keyword>
<keyword id="KW-1185">Reference proteome</keyword>
<proteinExistence type="inferred from homology"/>
<protein>
    <recommendedName>
        <fullName evidence="1">NADPH-dependent 7-cyano-7-deazaguanine reductase</fullName>
        <ecNumber evidence="1">1.7.1.13</ecNumber>
    </recommendedName>
    <alternativeName>
        <fullName evidence="1">7-cyano-7-carbaguanine reductase</fullName>
    </alternativeName>
    <alternativeName>
        <fullName evidence="1">NADPH-dependent nitrile oxidoreductase</fullName>
    </alternativeName>
    <alternativeName>
        <fullName evidence="1">PreQ(0) reductase</fullName>
    </alternativeName>
</protein>
<reference key="1">
    <citation type="submission" date="2006-08" db="EMBL/GenBank/DDBJ databases">
        <title>Complete sequence of Alkalilimnicola ehrilichei MLHE-1.</title>
        <authorList>
            <person name="Copeland A."/>
            <person name="Lucas S."/>
            <person name="Lapidus A."/>
            <person name="Barry K."/>
            <person name="Detter J.C."/>
            <person name="Glavina del Rio T."/>
            <person name="Hammon N."/>
            <person name="Israni S."/>
            <person name="Dalin E."/>
            <person name="Tice H."/>
            <person name="Pitluck S."/>
            <person name="Sims D."/>
            <person name="Brettin T."/>
            <person name="Bruce D."/>
            <person name="Han C."/>
            <person name="Tapia R."/>
            <person name="Gilna P."/>
            <person name="Schmutz J."/>
            <person name="Larimer F."/>
            <person name="Land M."/>
            <person name="Hauser L."/>
            <person name="Kyrpides N."/>
            <person name="Mikhailova N."/>
            <person name="Oremland R.S."/>
            <person name="Hoeft S.E."/>
            <person name="Switzer-Blum J."/>
            <person name="Kulp T."/>
            <person name="King G."/>
            <person name="Tabita R."/>
            <person name="Witte B."/>
            <person name="Santini J.M."/>
            <person name="Basu P."/>
            <person name="Hollibaugh J.T."/>
            <person name="Xie G."/>
            <person name="Stolz J.F."/>
            <person name="Richardson P."/>
        </authorList>
    </citation>
    <scope>NUCLEOTIDE SEQUENCE [LARGE SCALE GENOMIC DNA]</scope>
    <source>
        <strain>ATCC BAA-1101 / DSM 17681 / MLHE-1</strain>
    </source>
</reference>
<accession>Q0AAV5</accession>
<evidence type="ECO:0000255" key="1">
    <source>
        <dbReference type="HAMAP-Rule" id="MF_00818"/>
    </source>
</evidence>